<organism>
    <name type="scientific">Escherichia fergusonii (strain ATCC 35469 / DSM 13698 / CCUG 18766 / IAM 14443 / JCM 21226 / LMG 7866 / NBRC 102419 / NCTC 12128 / CDC 0568-73)</name>
    <dbReference type="NCBI Taxonomy" id="585054"/>
    <lineage>
        <taxon>Bacteria</taxon>
        <taxon>Pseudomonadati</taxon>
        <taxon>Pseudomonadota</taxon>
        <taxon>Gammaproteobacteria</taxon>
        <taxon>Enterobacterales</taxon>
        <taxon>Enterobacteriaceae</taxon>
        <taxon>Escherichia</taxon>
    </lineage>
</organism>
<sequence>MLQLLLAVFIGGGTGSVARWMLSMRFNPLHQAIPLGTLAANLLGAFIIGMGFAWFSRMTNIDPVWKVLITTGFCGGLTTFSTFSAEVVFLLQEGRFGWAMLNVLVNLLGSFAMTALAFWIFSASTAN</sequence>
<gene>
    <name evidence="1" type="primary">fluC</name>
    <name evidence="1" type="synonym">crcB</name>
    <name type="ordered locus">EFER_2479</name>
</gene>
<protein>
    <recommendedName>
        <fullName evidence="1">Fluoride-specific ion channel FluC</fullName>
    </recommendedName>
</protein>
<evidence type="ECO:0000255" key="1">
    <source>
        <dbReference type="HAMAP-Rule" id="MF_00454"/>
    </source>
</evidence>
<accession>B7LLI6</accession>
<dbReference type="EMBL" id="CU928158">
    <property type="protein sequence ID" value="CAQ89976.1"/>
    <property type="molecule type" value="Genomic_DNA"/>
</dbReference>
<dbReference type="RefSeq" id="WP_000939755.1">
    <property type="nucleotide sequence ID" value="NC_011740.1"/>
</dbReference>
<dbReference type="SMR" id="B7LLI6"/>
<dbReference type="GeneID" id="75056485"/>
<dbReference type="KEGG" id="efe:EFER_2479"/>
<dbReference type="HOGENOM" id="CLU_114342_3_3_6"/>
<dbReference type="OrthoDB" id="9806299at2"/>
<dbReference type="Proteomes" id="UP000000745">
    <property type="component" value="Chromosome"/>
</dbReference>
<dbReference type="GO" id="GO:0005886">
    <property type="term" value="C:plasma membrane"/>
    <property type="evidence" value="ECO:0007669"/>
    <property type="project" value="UniProtKB-SubCell"/>
</dbReference>
<dbReference type="GO" id="GO:0062054">
    <property type="term" value="F:fluoride channel activity"/>
    <property type="evidence" value="ECO:0007669"/>
    <property type="project" value="UniProtKB-UniRule"/>
</dbReference>
<dbReference type="GO" id="GO:0046872">
    <property type="term" value="F:metal ion binding"/>
    <property type="evidence" value="ECO:0007669"/>
    <property type="project" value="UniProtKB-KW"/>
</dbReference>
<dbReference type="GO" id="GO:0140114">
    <property type="term" value="P:cellular detoxification of fluoride"/>
    <property type="evidence" value="ECO:0007669"/>
    <property type="project" value="UniProtKB-UniRule"/>
</dbReference>
<dbReference type="HAMAP" id="MF_00454">
    <property type="entry name" value="FluC"/>
    <property type="match status" value="1"/>
</dbReference>
<dbReference type="InterPro" id="IPR003691">
    <property type="entry name" value="FluC"/>
</dbReference>
<dbReference type="NCBIfam" id="TIGR00494">
    <property type="entry name" value="crcB"/>
    <property type="match status" value="1"/>
</dbReference>
<dbReference type="NCBIfam" id="NF010792">
    <property type="entry name" value="PRK14196.1"/>
    <property type="match status" value="1"/>
</dbReference>
<dbReference type="PANTHER" id="PTHR28259">
    <property type="entry name" value="FLUORIDE EXPORT PROTEIN 1-RELATED"/>
    <property type="match status" value="1"/>
</dbReference>
<dbReference type="PANTHER" id="PTHR28259:SF1">
    <property type="entry name" value="FLUORIDE EXPORT PROTEIN 1-RELATED"/>
    <property type="match status" value="1"/>
</dbReference>
<dbReference type="Pfam" id="PF02537">
    <property type="entry name" value="CRCB"/>
    <property type="match status" value="1"/>
</dbReference>
<name>FLUC_ESCF3</name>
<proteinExistence type="inferred from homology"/>
<keyword id="KW-0997">Cell inner membrane</keyword>
<keyword id="KW-1003">Cell membrane</keyword>
<keyword id="KW-0407">Ion channel</keyword>
<keyword id="KW-0406">Ion transport</keyword>
<keyword id="KW-0472">Membrane</keyword>
<keyword id="KW-0479">Metal-binding</keyword>
<keyword id="KW-0915">Sodium</keyword>
<keyword id="KW-0812">Transmembrane</keyword>
<keyword id="KW-1133">Transmembrane helix</keyword>
<keyword id="KW-0813">Transport</keyword>
<comment type="function">
    <text evidence="1">Fluoride-specific ion channel. Important for reducing fluoride concentration in the cell, thus reducing its toxicity.</text>
</comment>
<comment type="catalytic activity">
    <reaction evidence="1">
        <text>fluoride(in) = fluoride(out)</text>
        <dbReference type="Rhea" id="RHEA:76159"/>
        <dbReference type="ChEBI" id="CHEBI:17051"/>
    </reaction>
    <physiologicalReaction direction="left-to-right" evidence="1">
        <dbReference type="Rhea" id="RHEA:76160"/>
    </physiologicalReaction>
</comment>
<comment type="activity regulation">
    <text evidence="1">Na(+) is not transported, but it plays an essential structural role and its presence is essential for fluoride channel function.</text>
</comment>
<comment type="subcellular location">
    <subcellularLocation>
        <location evidence="1">Cell inner membrane</location>
        <topology evidence="1">Multi-pass membrane protein</topology>
    </subcellularLocation>
</comment>
<comment type="similarity">
    <text evidence="1">Belongs to the fluoride channel Fluc/FEX (TC 1.A.43) family.</text>
</comment>
<reference key="1">
    <citation type="journal article" date="2009" name="PLoS Genet.">
        <title>Organised genome dynamics in the Escherichia coli species results in highly diverse adaptive paths.</title>
        <authorList>
            <person name="Touchon M."/>
            <person name="Hoede C."/>
            <person name="Tenaillon O."/>
            <person name="Barbe V."/>
            <person name="Baeriswyl S."/>
            <person name="Bidet P."/>
            <person name="Bingen E."/>
            <person name="Bonacorsi S."/>
            <person name="Bouchier C."/>
            <person name="Bouvet O."/>
            <person name="Calteau A."/>
            <person name="Chiapello H."/>
            <person name="Clermont O."/>
            <person name="Cruveiller S."/>
            <person name="Danchin A."/>
            <person name="Diard M."/>
            <person name="Dossat C."/>
            <person name="Karoui M.E."/>
            <person name="Frapy E."/>
            <person name="Garry L."/>
            <person name="Ghigo J.M."/>
            <person name="Gilles A.M."/>
            <person name="Johnson J."/>
            <person name="Le Bouguenec C."/>
            <person name="Lescat M."/>
            <person name="Mangenot S."/>
            <person name="Martinez-Jehanne V."/>
            <person name="Matic I."/>
            <person name="Nassif X."/>
            <person name="Oztas S."/>
            <person name="Petit M.A."/>
            <person name="Pichon C."/>
            <person name="Rouy Z."/>
            <person name="Ruf C.S."/>
            <person name="Schneider D."/>
            <person name="Tourret J."/>
            <person name="Vacherie B."/>
            <person name="Vallenet D."/>
            <person name="Medigue C."/>
            <person name="Rocha E.P.C."/>
            <person name="Denamur E."/>
        </authorList>
    </citation>
    <scope>NUCLEOTIDE SEQUENCE [LARGE SCALE GENOMIC DNA]</scope>
    <source>
        <strain>ATCC 35469 / DSM 13698 / BCRC 15582 / CCUG 18766 / IAM 14443 / JCM 21226 / LMG 7866 / NBRC 102419 / NCTC 12128 / CDC 0568-73</strain>
    </source>
</reference>
<feature type="chain" id="PRO_1000125131" description="Fluoride-specific ion channel FluC">
    <location>
        <begin position="1"/>
        <end position="127"/>
    </location>
</feature>
<feature type="transmembrane region" description="Helical" evidence="1">
    <location>
        <begin position="4"/>
        <end position="24"/>
    </location>
</feature>
<feature type="transmembrane region" description="Helical" evidence="1">
    <location>
        <begin position="35"/>
        <end position="55"/>
    </location>
</feature>
<feature type="transmembrane region" description="Helical" evidence="1">
    <location>
        <begin position="71"/>
        <end position="91"/>
    </location>
</feature>
<feature type="transmembrane region" description="Helical" evidence="1">
    <location>
        <begin position="103"/>
        <end position="123"/>
    </location>
</feature>
<feature type="binding site" evidence="1">
    <location>
        <position position="75"/>
    </location>
    <ligand>
        <name>Na(+)</name>
        <dbReference type="ChEBI" id="CHEBI:29101"/>
        <note>structural</note>
    </ligand>
</feature>
<feature type="binding site" evidence="1">
    <location>
        <position position="78"/>
    </location>
    <ligand>
        <name>Na(+)</name>
        <dbReference type="ChEBI" id="CHEBI:29101"/>
        <note>structural</note>
    </ligand>
</feature>